<keyword id="KW-0687">Ribonucleoprotein</keyword>
<keyword id="KW-0689">Ribosomal protein</keyword>
<feature type="chain" id="PRO_0000347074" description="Large ribosomal subunit protein uL30">
    <location>
        <begin position="1"/>
        <end position="68"/>
    </location>
</feature>
<organism>
    <name type="scientific">Paenarthrobacter aurescens (strain TC1)</name>
    <dbReference type="NCBI Taxonomy" id="290340"/>
    <lineage>
        <taxon>Bacteria</taxon>
        <taxon>Bacillati</taxon>
        <taxon>Actinomycetota</taxon>
        <taxon>Actinomycetes</taxon>
        <taxon>Micrococcales</taxon>
        <taxon>Micrococcaceae</taxon>
        <taxon>Paenarthrobacter</taxon>
    </lineage>
</organism>
<comment type="subunit">
    <text evidence="1">Part of the 50S ribosomal subunit.</text>
</comment>
<comment type="similarity">
    <text evidence="1">Belongs to the universal ribosomal protein uL30 family.</text>
</comment>
<accession>A1R8S8</accession>
<proteinExistence type="inferred from homology"/>
<dbReference type="EMBL" id="CP000474">
    <property type="protein sequence ID" value="ABM07566.1"/>
    <property type="molecule type" value="Genomic_DNA"/>
</dbReference>
<dbReference type="RefSeq" id="WP_011775580.1">
    <property type="nucleotide sequence ID" value="NC_008711.1"/>
</dbReference>
<dbReference type="SMR" id="A1R8S8"/>
<dbReference type="STRING" id="290340.AAur_2931"/>
<dbReference type="GeneID" id="97301775"/>
<dbReference type="KEGG" id="aau:AAur_2931"/>
<dbReference type="eggNOG" id="COG1841">
    <property type="taxonomic scope" value="Bacteria"/>
</dbReference>
<dbReference type="HOGENOM" id="CLU_131047_2_0_11"/>
<dbReference type="OrthoDB" id="9812790at2"/>
<dbReference type="Proteomes" id="UP000000637">
    <property type="component" value="Chromosome"/>
</dbReference>
<dbReference type="GO" id="GO:0022625">
    <property type="term" value="C:cytosolic large ribosomal subunit"/>
    <property type="evidence" value="ECO:0007669"/>
    <property type="project" value="TreeGrafter"/>
</dbReference>
<dbReference type="GO" id="GO:0003735">
    <property type="term" value="F:structural constituent of ribosome"/>
    <property type="evidence" value="ECO:0007669"/>
    <property type="project" value="InterPro"/>
</dbReference>
<dbReference type="GO" id="GO:0006412">
    <property type="term" value="P:translation"/>
    <property type="evidence" value="ECO:0007669"/>
    <property type="project" value="UniProtKB-UniRule"/>
</dbReference>
<dbReference type="CDD" id="cd01658">
    <property type="entry name" value="Ribosomal_L30"/>
    <property type="match status" value="1"/>
</dbReference>
<dbReference type="Gene3D" id="3.30.1390.20">
    <property type="entry name" value="Ribosomal protein L30, ferredoxin-like fold domain"/>
    <property type="match status" value="1"/>
</dbReference>
<dbReference type="HAMAP" id="MF_01371_B">
    <property type="entry name" value="Ribosomal_uL30_B"/>
    <property type="match status" value="1"/>
</dbReference>
<dbReference type="InterPro" id="IPR036919">
    <property type="entry name" value="Ribo_uL30_ferredoxin-like_sf"/>
</dbReference>
<dbReference type="InterPro" id="IPR005996">
    <property type="entry name" value="Ribosomal_uL30_bac-type"/>
</dbReference>
<dbReference type="InterPro" id="IPR018038">
    <property type="entry name" value="Ribosomal_uL30_CS"/>
</dbReference>
<dbReference type="InterPro" id="IPR016082">
    <property type="entry name" value="Ribosomal_uL30_ferredoxin-like"/>
</dbReference>
<dbReference type="NCBIfam" id="TIGR01308">
    <property type="entry name" value="rpmD_bact"/>
    <property type="match status" value="1"/>
</dbReference>
<dbReference type="PANTHER" id="PTHR15892:SF2">
    <property type="entry name" value="LARGE RIBOSOMAL SUBUNIT PROTEIN UL30M"/>
    <property type="match status" value="1"/>
</dbReference>
<dbReference type="PANTHER" id="PTHR15892">
    <property type="entry name" value="MITOCHONDRIAL RIBOSOMAL PROTEIN L30"/>
    <property type="match status" value="1"/>
</dbReference>
<dbReference type="Pfam" id="PF00327">
    <property type="entry name" value="Ribosomal_L30"/>
    <property type="match status" value="1"/>
</dbReference>
<dbReference type="PIRSF" id="PIRSF002211">
    <property type="entry name" value="Ribosomal_L30_bac-type"/>
    <property type="match status" value="1"/>
</dbReference>
<dbReference type="SUPFAM" id="SSF55129">
    <property type="entry name" value="Ribosomal protein L30p/L7e"/>
    <property type="match status" value="1"/>
</dbReference>
<dbReference type="PROSITE" id="PS00634">
    <property type="entry name" value="RIBOSOMAL_L30"/>
    <property type="match status" value="1"/>
</dbReference>
<reference key="1">
    <citation type="journal article" date="2006" name="PLoS Genet.">
        <title>Secrets of soil survival revealed by the genome sequence of Arthrobacter aurescens TC1.</title>
        <authorList>
            <person name="Mongodin E.F."/>
            <person name="Shapir N."/>
            <person name="Daugherty S.C."/>
            <person name="DeBoy R.T."/>
            <person name="Emerson J.B."/>
            <person name="Shvartzbeyn A."/>
            <person name="Radune D."/>
            <person name="Vamathevan J."/>
            <person name="Riggs F."/>
            <person name="Grinberg V."/>
            <person name="Khouri H.M."/>
            <person name="Wackett L.P."/>
            <person name="Nelson K.E."/>
            <person name="Sadowsky M.J."/>
        </authorList>
    </citation>
    <scope>NUCLEOTIDE SEQUENCE [LARGE SCALE GENOMIC DNA]</scope>
    <source>
        <strain>TC1</strain>
    </source>
</reference>
<protein>
    <recommendedName>
        <fullName evidence="1">Large ribosomal subunit protein uL30</fullName>
    </recommendedName>
    <alternativeName>
        <fullName evidence="2">50S ribosomal protein L30</fullName>
    </alternativeName>
</protein>
<gene>
    <name evidence="1" type="primary">rpmD</name>
    <name type="ordered locus">AAur_2931</name>
</gene>
<sequence>MAKNLTPSDAKLEITQIKGVIGAKQNQKATLRSLGLKRIGHTVVRNADAVTVGMLNTVPHLVNVEEAK</sequence>
<evidence type="ECO:0000255" key="1">
    <source>
        <dbReference type="HAMAP-Rule" id="MF_01371"/>
    </source>
</evidence>
<evidence type="ECO:0000305" key="2"/>
<name>RL30_PAEAT</name>